<gene>
    <name type="primary">ND3</name>
    <name type="synonym">NDH3</name>
</gene>
<organism>
    <name type="scientific">Paramecium tetraurelia</name>
    <dbReference type="NCBI Taxonomy" id="5888"/>
    <lineage>
        <taxon>Eukaryota</taxon>
        <taxon>Sar</taxon>
        <taxon>Alveolata</taxon>
        <taxon>Ciliophora</taxon>
        <taxon>Intramacronucleata</taxon>
        <taxon>Oligohymenophorea</taxon>
        <taxon>Peniculida</taxon>
        <taxon>Parameciidae</taxon>
        <taxon>Paramecium</taxon>
    </lineage>
</organism>
<protein>
    <recommendedName>
        <fullName>NADH-ubiquinone oxidoreductase chain 3</fullName>
        <ecNumber>7.1.1.2</ecNumber>
    </recommendedName>
    <alternativeName>
        <fullName>NADH dehydrogenase subunit 3</fullName>
    </alternativeName>
</protein>
<geneLocation type="mitochondrion"/>
<evidence type="ECO:0000250" key="1"/>
<evidence type="ECO:0000255" key="2"/>
<evidence type="ECO:0000305" key="3"/>
<name>NU3M_PARTE</name>
<dbReference type="EC" id="7.1.1.2"/>
<dbReference type="EMBL" id="X15917">
    <property type="protein sequence ID" value="CAA34036.1"/>
    <property type="molecule type" value="Genomic_DNA"/>
</dbReference>
<dbReference type="EMBL" id="M15275">
    <property type="protein sequence ID" value="AAA79262.1"/>
    <property type="molecule type" value="Genomic_DNA"/>
</dbReference>
<dbReference type="PIR" id="S07727">
    <property type="entry name" value="S07727"/>
</dbReference>
<dbReference type="SMR" id="P15579"/>
<dbReference type="GO" id="GO:0031966">
    <property type="term" value="C:mitochondrial membrane"/>
    <property type="evidence" value="ECO:0007669"/>
    <property type="project" value="UniProtKB-SubCell"/>
</dbReference>
<dbReference type="GO" id="GO:0008137">
    <property type="term" value="F:NADH dehydrogenase (ubiquinone) activity"/>
    <property type="evidence" value="ECO:0007669"/>
    <property type="project" value="UniProtKB-EC"/>
</dbReference>
<dbReference type="Gene3D" id="1.20.58.1610">
    <property type="entry name" value="NADH:ubiquinone/plastoquinone oxidoreductase, chain 3"/>
    <property type="match status" value="1"/>
</dbReference>
<dbReference type="InterPro" id="IPR000440">
    <property type="entry name" value="NADH_UbQ/plastoQ_OxRdtase_su3"/>
</dbReference>
<dbReference type="InterPro" id="IPR038430">
    <property type="entry name" value="NDAH_ubi_oxred_su3_sf"/>
</dbReference>
<dbReference type="Pfam" id="PF00507">
    <property type="entry name" value="Oxidored_q4"/>
    <property type="match status" value="1"/>
</dbReference>
<sequence length="120" mass="14449">MGSMTLLFFVEHVFIFCMIFWLLTWVAEYFFKSKNNKQKHQFYECGIRALSELNIQINLNFSIVCVFLILYDVEFIFMYPFFFNFFLVNAGAFLVFFVFLFFVFYSLVYDSVQNSLALQL</sequence>
<comment type="function">
    <text evidence="1">Core subunit of the mitochondrial membrane respiratory chain NADH dehydrogenase (Complex I) that is believed to belong to the minimal assembly required for catalysis. Complex I functions in the transfer of electrons from NADH to the respiratory chain. The immediate electron acceptor for the enzyme is believed to be ubiquinone (By similarity).</text>
</comment>
<comment type="catalytic activity">
    <reaction>
        <text>a ubiquinone + NADH + 5 H(+)(in) = a ubiquinol + NAD(+) + 4 H(+)(out)</text>
        <dbReference type="Rhea" id="RHEA:29091"/>
        <dbReference type="Rhea" id="RHEA-COMP:9565"/>
        <dbReference type="Rhea" id="RHEA-COMP:9566"/>
        <dbReference type="ChEBI" id="CHEBI:15378"/>
        <dbReference type="ChEBI" id="CHEBI:16389"/>
        <dbReference type="ChEBI" id="CHEBI:17976"/>
        <dbReference type="ChEBI" id="CHEBI:57540"/>
        <dbReference type="ChEBI" id="CHEBI:57945"/>
        <dbReference type="EC" id="7.1.1.2"/>
    </reaction>
</comment>
<comment type="subcellular location">
    <subcellularLocation>
        <location evidence="1">Mitochondrion membrane</location>
        <topology evidence="1">Multi-pass membrane protein</topology>
    </subcellularLocation>
</comment>
<comment type="similarity">
    <text evidence="3">Belongs to the complex I subunit 3 family.</text>
</comment>
<reference key="1">
    <citation type="journal article" date="1990" name="Nucleic Acids Res.">
        <title>Nucleotide sequence of the mitochondrial genome of Paramecium.</title>
        <authorList>
            <person name="Pritchard A.E."/>
            <person name="Seilhamer J.J."/>
            <person name="Mahalingam R."/>
            <person name="Sable C.L."/>
            <person name="Venuti S.E."/>
            <person name="Cummings D.J."/>
        </authorList>
    </citation>
    <scope>NUCLEOTIDE SEQUENCE [GENOMIC DNA]</scope>
    <source>
        <strain>Stock 51</strain>
    </source>
</reference>
<reference key="2">
    <citation type="journal article" date="1986" name="Gene">
        <title>Paramecium mitochondrial DNA sequences and RNA transcripts for cytochrome oxidase subunit I, URF1, and three ORFs adjacent to the replication origin.</title>
        <authorList>
            <person name="Pritchard A.E."/>
            <person name="Seilhamer J.J."/>
            <person name="Cummings D.J."/>
        </authorList>
    </citation>
    <scope>NUCLEOTIDE SEQUENCE [GENOMIC DNA]</scope>
    <source>
        <strain>Stock 51</strain>
    </source>
</reference>
<proteinExistence type="inferred from homology"/>
<keyword id="KW-0249">Electron transport</keyword>
<keyword id="KW-0472">Membrane</keyword>
<keyword id="KW-0496">Mitochondrion</keyword>
<keyword id="KW-0520">NAD</keyword>
<keyword id="KW-0679">Respiratory chain</keyword>
<keyword id="KW-1278">Translocase</keyword>
<keyword id="KW-0812">Transmembrane</keyword>
<keyword id="KW-1133">Transmembrane helix</keyword>
<keyword id="KW-0813">Transport</keyword>
<keyword id="KW-0830">Ubiquinone</keyword>
<feature type="chain" id="PRO_0000117792" description="NADH-ubiquinone oxidoreductase chain 3">
    <location>
        <begin position="1"/>
        <end position="120"/>
    </location>
</feature>
<feature type="transmembrane region" description="Helical" evidence="2">
    <location>
        <begin position="6"/>
        <end position="26"/>
    </location>
</feature>
<feature type="transmembrane region" description="Helical" evidence="2">
    <location>
        <begin position="63"/>
        <end position="83"/>
    </location>
</feature>
<feature type="transmembrane region" description="Helical" evidence="2">
    <location>
        <begin position="85"/>
        <end position="105"/>
    </location>
</feature>
<accession>P15579</accession>